<evidence type="ECO:0000255" key="1">
    <source>
        <dbReference type="HAMAP-Rule" id="MF_00500"/>
    </source>
</evidence>
<evidence type="ECO:0000305" key="2"/>
<sequence>MANNPGAKKAIRKIARRTEVNTARRSRVRTFLRKFEDAIAKGDVAVAKAAFVEAQSELMRAVSKGVVHPNTGSRKVSRLAARLKKLDKAAA</sequence>
<keyword id="KW-1185">Reference proteome</keyword>
<keyword id="KW-0687">Ribonucleoprotein</keyword>
<keyword id="KW-0689">Ribosomal protein</keyword>
<keyword id="KW-0694">RNA-binding</keyword>
<keyword id="KW-0699">rRNA-binding</keyword>
<feature type="chain" id="PRO_0000167942" description="Small ribosomal subunit protein bS20">
    <location>
        <begin position="1"/>
        <end position="91"/>
    </location>
</feature>
<gene>
    <name evidence="1" type="primary">rpsT</name>
    <name type="ordered locus">CC_0007</name>
</gene>
<protein>
    <recommendedName>
        <fullName evidence="1">Small ribosomal subunit protein bS20</fullName>
    </recommendedName>
    <alternativeName>
        <fullName evidence="2">30S ribosomal protein S20</fullName>
    </alternativeName>
</protein>
<proteinExistence type="inferred from homology"/>
<reference key="1">
    <citation type="journal article" date="2001" name="Proc. Natl. Acad. Sci. U.S.A.">
        <title>Complete genome sequence of Caulobacter crescentus.</title>
        <authorList>
            <person name="Nierman W.C."/>
            <person name="Feldblyum T.V."/>
            <person name="Laub M.T."/>
            <person name="Paulsen I.T."/>
            <person name="Nelson K.E."/>
            <person name="Eisen J.A."/>
            <person name="Heidelberg J.F."/>
            <person name="Alley M.R.K."/>
            <person name="Ohta N."/>
            <person name="Maddock J.R."/>
            <person name="Potocka I."/>
            <person name="Nelson W.C."/>
            <person name="Newton A."/>
            <person name="Stephens C."/>
            <person name="Phadke N.D."/>
            <person name="Ely B."/>
            <person name="DeBoy R.T."/>
            <person name="Dodson R.J."/>
            <person name="Durkin A.S."/>
            <person name="Gwinn M.L."/>
            <person name="Haft D.H."/>
            <person name="Kolonay J.F."/>
            <person name="Smit J."/>
            <person name="Craven M.B."/>
            <person name="Khouri H.M."/>
            <person name="Shetty J."/>
            <person name="Berry K.J."/>
            <person name="Utterback T.R."/>
            <person name="Tran K."/>
            <person name="Wolf A.M."/>
            <person name="Vamathevan J.J."/>
            <person name="Ermolaeva M.D."/>
            <person name="White O."/>
            <person name="Salzberg S.L."/>
            <person name="Venter J.C."/>
            <person name="Shapiro L."/>
            <person name="Fraser C.M."/>
        </authorList>
    </citation>
    <scope>NUCLEOTIDE SEQUENCE [LARGE SCALE GENOMIC DNA]</scope>
    <source>
        <strain>ATCC 19089 / CIP 103742 / CB 15</strain>
    </source>
</reference>
<comment type="function">
    <text evidence="1">Binds directly to 16S ribosomal RNA.</text>
</comment>
<comment type="similarity">
    <text evidence="1">Belongs to the bacterial ribosomal protein bS20 family.</text>
</comment>
<accession>P0CAW3</accession>
<accession>P49400</accession>
<organism>
    <name type="scientific">Caulobacter vibrioides (strain ATCC 19089 / CIP 103742 / CB 15)</name>
    <name type="common">Caulobacter crescentus</name>
    <dbReference type="NCBI Taxonomy" id="190650"/>
    <lineage>
        <taxon>Bacteria</taxon>
        <taxon>Pseudomonadati</taxon>
        <taxon>Pseudomonadota</taxon>
        <taxon>Alphaproteobacteria</taxon>
        <taxon>Caulobacterales</taxon>
        <taxon>Caulobacteraceae</taxon>
        <taxon>Caulobacter</taxon>
    </lineage>
</organism>
<dbReference type="EMBL" id="AE005673">
    <property type="protein sequence ID" value="AAK21995.1"/>
    <property type="molecule type" value="Genomic_DNA"/>
</dbReference>
<dbReference type="PIR" id="G87249">
    <property type="entry name" value="G87249"/>
</dbReference>
<dbReference type="RefSeq" id="NP_418827.1">
    <property type="nucleotide sequence ID" value="NC_002696.2"/>
</dbReference>
<dbReference type="RefSeq" id="WP_004617408.1">
    <property type="nucleotide sequence ID" value="NC_002696.2"/>
</dbReference>
<dbReference type="SMR" id="P0CAW3"/>
<dbReference type="STRING" id="190650.CC_0007"/>
<dbReference type="EnsemblBacteria" id="AAK21995">
    <property type="protein sequence ID" value="AAK21995"/>
    <property type="gene ID" value="CC_0007"/>
</dbReference>
<dbReference type="KEGG" id="ccr:CC_0007"/>
<dbReference type="PATRIC" id="fig|190650.5.peg.7"/>
<dbReference type="eggNOG" id="COG0268">
    <property type="taxonomic scope" value="Bacteria"/>
</dbReference>
<dbReference type="HOGENOM" id="CLU_160655_3_0_5"/>
<dbReference type="BioCyc" id="CAULO:CC0007-MONOMER"/>
<dbReference type="Proteomes" id="UP000001816">
    <property type="component" value="Chromosome"/>
</dbReference>
<dbReference type="GO" id="GO:0005829">
    <property type="term" value="C:cytosol"/>
    <property type="evidence" value="ECO:0007669"/>
    <property type="project" value="TreeGrafter"/>
</dbReference>
<dbReference type="GO" id="GO:0015935">
    <property type="term" value="C:small ribosomal subunit"/>
    <property type="evidence" value="ECO:0007669"/>
    <property type="project" value="TreeGrafter"/>
</dbReference>
<dbReference type="GO" id="GO:0070181">
    <property type="term" value="F:small ribosomal subunit rRNA binding"/>
    <property type="evidence" value="ECO:0007669"/>
    <property type="project" value="TreeGrafter"/>
</dbReference>
<dbReference type="GO" id="GO:0003735">
    <property type="term" value="F:structural constituent of ribosome"/>
    <property type="evidence" value="ECO:0007669"/>
    <property type="project" value="InterPro"/>
</dbReference>
<dbReference type="GO" id="GO:0006412">
    <property type="term" value="P:translation"/>
    <property type="evidence" value="ECO:0007669"/>
    <property type="project" value="UniProtKB-UniRule"/>
</dbReference>
<dbReference type="FunFam" id="1.20.58.110:FF:000001">
    <property type="entry name" value="30S ribosomal protein S20"/>
    <property type="match status" value="1"/>
</dbReference>
<dbReference type="Gene3D" id="1.20.58.110">
    <property type="entry name" value="Ribosomal protein S20"/>
    <property type="match status" value="1"/>
</dbReference>
<dbReference type="HAMAP" id="MF_00500">
    <property type="entry name" value="Ribosomal_bS20"/>
    <property type="match status" value="1"/>
</dbReference>
<dbReference type="InterPro" id="IPR002583">
    <property type="entry name" value="Ribosomal_bS20"/>
</dbReference>
<dbReference type="InterPro" id="IPR036510">
    <property type="entry name" value="Ribosomal_bS20_sf"/>
</dbReference>
<dbReference type="NCBIfam" id="TIGR00029">
    <property type="entry name" value="S20"/>
    <property type="match status" value="1"/>
</dbReference>
<dbReference type="PANTHER" id="PTHR33398">
    <property type="entry name" value="30S RIBOSOMAL PROTEIN S20"/>
    <property type="match status" value="1"/>
</dbReference>
<dbReference type="PANTHER" id="PTHR33398:SF1">
    <property type="entry name" value="SMALL RIBOSOMAL SUBUNIT PROTEIN BS20C"/>
    <property type="match status" value="1"/>
</dbReference>
<dbReference type="Pfam" id="PF01649">
    <property type="entry name" value="Ribosomal_S20p"/>
    <property type="match status" value="1"/>
</dbReference>
<dbReference type="SUPFAM" id="SSF46992">
    <property type="entry name" value="Ribosomal protein S20"/>
    <property type="match status" value="1"/>
</dbReference>
<name>RS20_CAUVC</name>